<proteinExistence type="evidence at protein level"/>
<gene>
    <name type="primary">MATA1</name>
    <name type="synonym">MAT1A</name>
</gene>
<feature type="chain" id="PRO_0000049201" description="Mating-type protein A1">
    <location>
        <begin position="1"/>
        <end position="126"/>
    </location>
</feature>
<feature type="DNA-binding region" description="Homeobox" evidence="1">
    <location>
        <begin position="70"/>
        <end position="126"/>
    </location>
</feature>
<feature type="helix" evidence="7">
    <location>
        <begin position="79"/>
        <end position="91"/>
    </location>
</feature>
<feature type="helix" evidence="7">
    <location>
        <begin position="97"/>
        <end position="106"/>
    </location>
</feature>
<feature type="helix" evidence="7">
    <location>
        <begin position="111"/>
        <end position="123"/>
    </location>
</feature>
<reference key="1">
    <citation type="journal article" date="1981" name="Cell">
        <title>The sequence of the DNAs coding for the mating-type loci of Saccharomyces cerevisiae.</title>
        <authorList>
            <person name="Astell C.R."/>
            <person name="Ahlstrom-Jonasson L."/>
            <person name="Smith M."/>
            <person name="Tatchell K."/>
            <person name="Nasmyth K.A."/>
            <person name="Hall B.D."/>
        </authorList>
    </citation>
    <scope>NUCLEOTIDE SEQUENCE [GENOMIC DNA]</scope>
</reference>
<reference key="2">
    <citation type="journal article" date="1981" name="Cold Spring Harb. Symp. Quant. Biol.">
        <title>Physical analysis of mating-type loci in Saccharomyces cerevisiae.</title>
        <authorList>
            <person name="Nasmyth K.A."/>
            <person name="Tatchell K."/>
            <person name="Hall B.D."/>
            <person name="Astell C."/>
            <person name="Smith M."/>
        </authorList>
    </citation>
    <scope>NUCLEOTIDE SEQUENCE [GENOMIC DNA]</scope>
</reference>
<reference key="3">
    <citation type="journal article" date="1984" name="EMBO J.">
        <title>The yeast MATa1 gene contains two introns.</title>
        <authorList>
            <person name="Miller A.M."/>
        </authorList>
    </citation>
    <scope>NUCLEOTIDE SEQUENCE [GENOMIC DNA]</scope>
    <scope>IDENTIFICATION OF INTRONS</scope>
</reference>
<reference key="4">
    <citation type="journal article" date="1981" name="Nature">
        <title>A position effect in the control of transcription at yeast mating type loci.</title>
        <authorList>
            <person name="Nasmyth K.A."/>
            <person name="Tatchell K."/>
            <person name="Hall B.D."/>
            <person name="Astell C.R."/>
            <person name="Smith M."/>
        </authorList>
    </citation>
    <scope>NUCLEOTIDE SEQUENCE [GENOMIC DNA] OF 1-11</scope>
</reference>
<reference key="5">
    <citation type="journal article" date="1984" name="Nature">
        <title>Fly and frog homoeo domains show homologies with yeast mating type regulatory proteins.</title>
        <authorList>
            <person name="Shepherd J.C.W."/>
            <person name="McGinnis W."/>
            <person name="Carrasco A.E."/>
            <person name="De Robertis E.M."/>
            <person name="Gehring W.J."/>
        </authorList>
    </citation>
    <scope>SIMILARITY TO HOMEOBOX PROTEINS</scope>
</reference>
<reference key="6">
    <citation type="journal article" date="1989" name="Mol. Cell. Biol.">
        <title>Role of intron splicing in the function of the MATa1 gene of Saccharomyces cerevisiae.</title>
        <authorList>
            <person name="Ner S.S."/>
            <person name="Smith M."/>
        </authorList>
    </citation>
    <scope>ROLE OF INTRON SPLICING IN THE FUNCTION OF MATA1</scope>
</reference>
<reference key="7">
    <citation type="journal article" date="1995" name="Curr. Opin. Genet. Dev.">
        <title>Molecular mechanisms of cell-type determination in budding yeast.</title>
        <authorList>
            <person name="Johnson A.D."/>
        </authorList>
    </citation>
    <scope>FUNCTION IN MATING-TYPE REGULATION</scope>
</reference>
<reference key="8">
    <citation type="journal article" date="1995" name="Science">
        <title>Crystal structure of the MATa1/MAT alpha 2 homeodomain heterodimer bound to DNA.</title>
        <authorList>
            <person name="Li T."/>
            <person name="Stark M.R."/>
            <person name="Johnson A.D."/>
            <person name="Wolberger C."/>
        </authorList>
    </citation>
    <scope>X-RAY CRYSTALLOGRAPHY (2.5 ANGSTROMS) OF HOMEOBOX IN COMPLEX WITH ALPHA2</scope>
</reference>
<reference key="9">
    <citation type="journal article" date="1998" name="Nucleic Acids Res.">
        <title>Crystal structure of the MATa1/MATalpha2 homeodomain heterodimer in complex with DNA containing an A-tract.</title>
        <authorList>
            <person name="Li T."/>
            <person name="Jin Y."/>
            <person name="Vershon A.K."/>
            <person name="Wolberger C."/>
        </authorList>
    </citation>
    <scope>X-RAY CRYSTALLOGRAPHY (2.5 ANGSTROMS) OF HOMEOBOX IN COMPLEX WITH ALPHA2</scope>
</reference>
<reference key="10">
    <citation type="journal article" date="2000" name="Biochemistry">
        <title>Cooperative ordering in homeodomain-DNA recognition: solution structure and dynamics of the MATa1 homeodomain.</title>
        <authorList>
            <person name="Anderson J.S."/>
            <person name="Forman M.D."/>
            <person name="Modleski S."/>
            <person name="Dahlquist F.W."/>
            <person name="Baxter S.M."/>
        </authorList>
    </citation>
    <scope>STRUCTURE BY NMR OF HOMEOBOX</scope>
</reference>
<reference key="11">
    <citation type="journal article" date="2002" name="Structure">
        <title>Structural and thermodynamic characterization of the DNA binding properties of a triple alanine mutant of MATalpha2.</title>
        <authorList>
            <person name="Ke A."/>
            <person name="Mathias J.R."/>
            <person name="Vershon A.K."/>
            <person name="Wolberger C."/>
        </authorList>
    </citation>
    <scope>X-RAY CRYSTALLOGRAPHY (2.3 ANGSTROMS) OF HOMEOBOX IN COMPLEX WITH ALPHA2</scope>
</reference>
<reference key="12">
    <citation type="journal article" date="2003" name="Protein Sci.">
        <title>Insights into binding cooperativity of MATa1/MATalpha2 from the crystal structure of a MATa1 homeodomain-maltose binding protein chimera.</title>
        <authorList>
            <person name="Ke A."/>
            <person name="Wolberger C."/>
        </authorList>
    </citation>
    <scope>X-RAY CRYSTALLOGRAPHY (2.1 ANGSTROMS) OF HOMEOBOX</scope>
</reference>
<organism>
    <name type="scientific">Saccharomyces cerevisiae</name>
    <name type="common">Baker's yeast</name>
    <dbReference type="NCBI Taxonomy" id="4932"/>
    <lineage>
        <taxon>Eukaryota</taxon>
        <taxon>Fungi</taxon>
        <taxon>Dikarya</taxon>
        <taxon>Ascomycota</taxon>
        <taxon>Saccharomycotina</taxon>
        <taxon>Saccharomycetes</taxon>
        <taxon>Saccharomycetales</taxon>
        <taxon>Saccharomycetaceae</taxon>
        <taxon>Saccharomyces</taxon>
    </lineage>
</organism>
<evidence type="ECO:0000255" key="1">
    <source>
        <dbReference type="PROSITE-ProRule" id="PRU00108"/>
    </source>
</evidence>
<evidence type="ECO:0000269" key="2">
    <source>
    </source>
</evidence>
<evidence type="ECO:0000269" key="3">
    <source>
    </source>
</evidence>
<evidence type="ECO:0000269" key="4">
    <source>
    </source>
</evidence>
<evidence type="ECO:0000269" key="5">
    <source>
    </source>
</evidence>
<evidence type="ECO:0000305" key="6"/>
<evidence type="ECO:0007829" key="7">
    <source>
        <dbReference type="PDB" id="1LE8"/>
    </source>
</evidence>
<sequence>MDDICSMAENINRTLFNILGTEIDEINLNTNNLYNFIMESNLTKVEQHTLHKNISNNRLEIYHHIKKEKSPKGKSSISPQARAFLEQVFRRKQSLNSKEKEEVAKKCGITPLQVRVWFINKRMRSK</sequence>
<name>MATA1_YEASX</name>
<keyword id="KW-0002">3D-structure</keyword>
<keyword id="KW-0238">DNA-binding</keyword>
<keyword id="KW-0371">Homeobox</keyword>
<keyword id="KW-0539">Nucleus</keyword>
<keyword id="KW-0804">Transcription</keyword>
<keyword id="KW-0805">Transcription regulation</keyword>
<accession>P0CY10</accession>
<accession>D6VR98</accession>
<accession>P01366</accession>
<accession>P09091</accession>
<accession>Q06724</accession>
<comment type="function">
    <text evidence="4">Mating type proteins are sequence specific DNA-binding proteins that act as master switches in yeast differentiation by controlling gene expression in a cell type-specific fashion. Transcriptional corepressor that, in a/alpha diploid cells, binds cooperatively with the ALPHA2 protein to a 21-bp DNA sequence termed the haploid-specific gene (hsg) operator, to repress transcription of haploid-specific genes and of MATALPHA1.</text>
</comment>
<comment type="subunit">
    <text evidence="2 3 5">Binds DNA with a high specificity as a heterodimer of A1 and ALPHA2.</text>
</comment>
<comment type="subcellular location">
    <subcellularLocation>
        <location>Nucleus</location>
    </subcellularLocation>
</comment>
<comment type="developmental stage">
    <text>Only present in a-cells and in a/alpha diploid cells.</text>
</comment>
<comment type="miscellaneous">
    <text>Was initially thought to be alternatively spliced.</text>
</comment>
<comment type="miscellaneous">
    <text>This gene is functional with 1, 2 or no introns, but the functional protein is produced only when both introns are spliced from the mRNA.</text>
</comment>
<comment type="miscellaneous">
    <text>There are three genetic loci for mating type genes in S.cerevisiae. MAT is the expression locus that determines the mating type of the cell, whereas HML (containing HMLALPHA1 and HMLALPHA2) and HMR (containing HMRA1 and HMRA2) represent silenced repositories of mating type information. The mating type is determined by the MAT locus, which contains either a copy of HML or of HMR. Diploid cells are usually heterozygous for the MAT locus.</text>
</comment>
<comment type="similarity">
    <text evidence="6">Belongs to the MATA1 family.</text>
</comment>
<comment type="sequence caution" evidence="6">
    <conflict type="erroneous gene model prediction">
        <sequence resource="EMBL-CDS" id="CAA24622"/>
    </conflict>
</comment>
<comment type="sequence caution" evidence="6">
    <conflict type="erroneous gene model prediction" ref="2"/>
</comment>
<protein>
    <recommendedName>
        <fullName>Mating-type protein A1</fullName>
        <shortName>MATa1 protein</shortName>
    </recommendedName>
</protein>
<dbReference type="EMBL" id="V01313">
    <property type="protein sequence ID" value="CAA24622.1"/>
    <property type="status" value="ALT_SEQ"/>
    <property type="molecule type" value="Genomic_DNA"/>
</dbReference>
<dbReference type="EMBL" id="V01312">
    <property type="protein sequence ID" value="CAA24619.1"/>
    <property type="molecule type" value="Genomic_DNA"/>
</dbReference>
<dbReference type="PIR" id="A90983">
    <property type="entry name" value="JEBY1"/>
</dbReference>
<dbReference type="PDB" id="1AKH">
    <property type="method" value="X-ray"/>
    <property type="resolution" value="2.50 A"/>
    <property type="chains" value="A=66-126"/>
</dbReference>
<dbReference type="PDB" id="1F43">
    <property type="method" value="NMR"/>
    <property type="chains" value="A=66-126"/>
</dbReference>
<dbReference type="PDB" id="1LE8">
    <property type="method" value="X-ray"/>
    <property type="resolution" value="2.30 A"/>
    <property type="chains" value="A=74-126"/>
</dbReference>
<dbReference type="PDB" id="1MH3">
    <property type="method" value="X-ray"/>
    <property type="resolution" value="2.10 A"/>
    <property type="chains" value="A=77-126"/>
</dbReference>
<dbReference type="PDB" id="1MH4">
    <property type="method" value="X-ray"/>
    <property type="resolution" value="2.30 A"/>
    <property type="chains" value="A=77-126"/>
</dbReference>
<dbReference type="PDB" id="1YRN">
    <property type="method" value="X-ray"/>
    <property type="resolution" value="2.50 A"/>
    <property type="chains" value="A=66-126"/>
</dbReference>
<dbReference type="PDBsum" id="1AKH"/>
<dbReference type="PDBsum" id="1F43"/>
<dbReference type="PDBsum" id="1LE8"/>
<dbReference type="PDBsum" id="1MH3"/>
<dbReference type="PDBsum" id="1MH4"/>
<dbReference type="PDBsum" id="1YRN"/>
<dbReference type="BMRB" id="P0CY10"/>
<dbReference type="SMR" id="P0CY10"/>
<dbReference type="IntAct" id="P0CY10">
    <property type="interactions" value="1"/>
</dbReference>
<dbReference type="MINT" id="P0CY10"/>
<dbReference type="KEGG" id="sce:YCR097W"/>
<dbReference type="SGD" id="S000029660">
    <property type="gene designation" value="MATA1"/>
</dbReference>
<dbReference type="VEuPathDB" id="FungiDB:YCR097W"/>
<dbReference type="PhylomeDB" id="P0CY10"/>
<dbReference type="EvolutionaryTrace" id="P0CY10"/>
<dbReference type="GO" id="GO:0005634">
    <property type="term" value="C:nucleus"/>
    <property type="evidence" value="ECO:0000314"/>
    <property type="project" value="SGD"/>
</dbReference>
<dbReference type="GO" id="GO:0003677">
    <property type="term" value="F:DNA binding"/>
    <property type="evidence" value="ECO:0007669"/>
    <property type="project" value="UniProtKB-KW"/>
</dbReference>
<dbReference type="GO" id="GO:0000981">
    <property type="term" value="F:DNA-binding transcription factor activity, RNA polymerase II-specific"/>
    <property type="evidence" value="ECO:0007669"/>
    <property type="project" value="InterPro"/>
</dbReference>
<dbReference type="GO" id="GO:0003714">
    <property type="term" value="F:transcription corepressor activity"/>
    <property type="evidence" value="ECO:0000314"/>
    <property type="project" value="SGD"/>
</dbReference>
<dbReference type="GO" id="GO:0007532">
    <property type="term" value="P:regulation of mating-type specific transcription, DNA-templated"/>
    <property type="evidence" value="ECO:0000314"/>
    <property type="project" value="SGD"/>
</dbReference>
<dbReference type="CDD" id="cd00086">
    <property type="entry name" value="homeodomain"/>
    <property type="match status" value="1"/>
</dbReference>
<dbReference type="Gene3D" id="1.10.10.60">
    <property type="entry name" value="Homeodomain-like"/>
    <property type="match status" value="1"/>
</dbReference>
<dbReference type="InterPro" id="IPR001356">
    <property type="entry name" value="HD"/>
</dbReference>
<dbReference type="InterPro" id="IPR050762">
    <property type="entry name" value="HD-ZIP_Homeobox_LZ_Class_II"/>
</dbReference>
<dbReference type="InterPro" id="IPR017970">
    <property type="entry name" value="Homeobox_CS"/>
</dbReference>
<dbReference type="InterPro" id="IPR009057">
    <property type="entry name" value="Homeodomain-like_sf"/>
</dbReference>
<dbReference type="PANTHER" id="PTHR45714">
    <property type="entry name" value="HOMEOBOX-LEUCINE ZIPPER PROTEIN HAT14"/>
    <property type="match status" value="1"/>
</dbReference>
<dbReference type="PANTHER" id="PTHR45714:SF34">
    <property type="entry name" value="HOMEOBOX-LEUCINE ZIPPER PROTEIN HAT9"/>
    <property type="match status" value="1"/>
</dbReference>
<dbReference type="Pfam" id="PF00046">
    <property type="entry name" value="Homeodomain"/>
    <property type="match status" value="1"/>
</dbReference>
<dbReference type="SMART" id="SM00389">
    <property type="entry name" value="HOX"/>
    <property type="match status" value="1"/>
</dbReference>
<dbReference type="SUPFAM" id="SSF46689">
    <property type="entry name" value="Homeodomain-like"/>
    <property type="match status" value="1"/>
</dbReference>
<dbReference type="PROSITE" id="PS00027">
    <property type="entry name" value="HOMEOBOX_1"/>
    <property type="match status" value="1"/>
</dbReference>
<dbReference type="PROSITE" id="PS50071">
    <property type="entry name" value="HOMEOBOX_2"/>
    <property type="match status" value="1"/>
</dbReference>